<proteinExistence type="predicted"/>
<feature type="chain" id="PRO_0000133306" description="Probable protein E5A">
    <location>
        <begin position="1"/>
        <end position="48"/>
    </location>
</feature>
<keyword id="KW-0244">Early protein</keyword>
<accession>P08348</accession>
<name>VE5A_BPV4</name>
<organism>
    <name type="scientific">Bos taurus papillomavirus 4</name>
    <name type="common">Bovine papillomavirus 4</name>
    <dbReference type="NCBI Taxonomy" id="10562"/>
    <lineage>
        <taxon>Viruses</taxon>
        <taxon>Monodnaviria</taxon>
        <taxon>Shotokuvirae</taxon>
        <taxon>Cossaviricota</taxon>
        <taxon>Papovaviricetes</taxon>
        <taxon>Zurhausenvirales</taxon>
        <taxon>Papillomaviridae</taxon>
        <taxon>Firstpapillomavirinae</taxon>
        <taxon>Xipapillomavirus</taxon>
        <taxon>Xipapillomavirus 1</taxon>
    </lineage>
</organism>
<protein>
    <recommendedName>
        <fullName>Probable protein E5A</fullName>
    </recommendedName>
</protein>
<reference key="1">
    <citation type="journal article" date="1987" name="J. Gen. Virol.">
        <title>The nucleotide sequence and genome organization of bovine papillomavirus type 4.</title>
        <authorList>
            <person name="Patel K.R."/>
            <person name="Smith K.T."/>
            <person name="Campo M.S."/>
        </authorList>
    </citation>
    <scope>NUCLEOTIDE SEQUENCE [GENOMIC DNA]</scope>
</reference>
<dbReference type="EMBL" id="X05817">
    <property type="status" value="NOT_ANNOTATED_CDS"/>
    <property type="molecule type" value="Genomic_DNA"/>
</dbReference>
<dbReference type="PIR" id="H27129">
    <property type="entry name" value="W5WL5A"/>
</dbReference>
<dbReference type="Proteomes" id="UP000007613">
    <property type="component" value="Segment"/>
</dbReference>
<sequence>MQHCILILAWGKCILKAKFFLPLLPVRFVLGDPEDNAGTQTGDPARGR</sequence>
<organismHost>
    <name type="scientific">Bos taurus</name>
    <name type="common">Bovine</name>
    <dbReference type="NCBI Taxonomy" id="9913"/>
</organismHost>